<proteinExistence type="inferred from homology"/>
<feature type="chain" id="PRO_1000131203" description="PKHD-type hydroxylase ABSDF3031">
    <location>
        <begin position="1"/>
        <end position="227"/>
    </location>
</feature>
<feature type="domain" description="Fe2OG dioxygenase" evidence="1">
    <location>
        <begin position="78"/>
        <end position="178"/>
    </location>
</feature>
<feature type="binding site" evidence="1">
    <location>
        <position position="96"/>
    </location>
    <ligand>
        <name>Fe cation</name>
        <dbReference type="ChEBI" id="CHEBI:24875"/>
    </ligand>
</feature>
<feature type="binding site" evidence="1">
    <location>
        <position position="98"/>
    </location>
    <ligand>
        <name>Fe cation</name>
        <dbReference type="ChEBI" id="CHEBI:24875"/>
    </ligand>
</feature>
<feature type="binding site" evidence="1">
    <location>
        <position position="159"/>
    </location>
    <ligand>
        <name>Fe cation</name>
        <dbReference type="ChEBI" id="CHEBI:24875"/>
    </ligand>
</feature>
<feature type="binding site" evidence="1">
    <location>
        <position position="169"/>
    </location>
    <ligand>
        <name>2-oxoglutarate</name>
        <dbReference type="ChEBI" id="CHEBI:16810"/>
    </ligand>
</feature>
<sequence length="227" mass="25960">MIHHIPNVLSKEQVAEFRKLMEEANWVGGKVTAGTLSASVKRNQQLSEQDPLTHHLSDIVIKAIWQNPLFQAAALPHKIIPPLFNRYDEHESFGFHVDNSIRLIRGTAEQIRTDLSCTLFLSEPDEYEGGDLVIEDTYGYHEVKLPAGDVVLYPSTSLHEVSSITAGTRFASFFWVQSLVRDDSKRHLLFSLDESIRELRKSHGDSYSEVMKLTNIYHNLIRMWSEL</sequence>
<comment type="cofactor">
    <cofactor evidence="1">
        <name>Fe(2+)</name>
        <dbReference type="ChEBI" id="CHEBI:29033"/>
    </cofactor>
    <text evidence="1">Binds 1 Fe(2+) ion per subunit.</text>
</comment>
<comment type="cofactor">
    <cofactor evidence="1">
        <name>L-ascorbate</name>
        <dbReference type="ChEBI" id="CHEBI:38290"/>
    </cofactor>
</comment>
<evidence type="ECO:0000255" key="1">
    <source>
        <dbReference type="HAMAP-Rule" id="MF_00657"/>
    </source>
</evidence>
<name>Y3031_ACIBS</name>
<reference key="1">
    <citation type="journal article" date="2008" name="PLoS ONE">
        <title>Comparative analysis of Acinetobacters: three genomes for three lifestyles.</title>
        <authorList>
            <person name="Vallenet D."/>
            <person name="Nordmann P."/>
            <person name="Barbe V."/>
            <person name="Poirel L."/>
            <person name="Mangenot S."/>
            <person name="Bataille E."/>
            <person name="Dossat C."/>
            <person name="Gas S."/>
            <person name="Kreimeyer A."/>
            <person name="Lenoble P."/>
            <person name="Oztas S."/>
            <person name="Poulain J."/>
            <person name="Segurens B."/>
            <person name="Robert C."/>
            <person name="Abergel C."/>
            <person name="Claverie J.-M."/>
            <person name="Raoult D."/>
            <person name="Medigue C."/>
            <person name="Weissenbach J."/>
            <person name="Cruveiller S."/>
        </authorList>
    </citation>
    <scope>NUCLEOTIDE SEQUENCE [LARGE SCALE GENOMIC DNA]</scope>
    <source>
        <strain>SDF</strain>
    </source>
</reference>
<accession>B0VL49</accession>
<protein>
    <recommendedName>
        <fullName evidence="1">PKHD-type hydroxylase ABSDF3031</fullName>
        <ecNumber evidence="1">1.14.11.-</ecNumber>
    </recommendedName>
</protein>
<keyword id="KW-0223">Dioxygenase</keyword>
<keyword id="KW-0408">Iron</keyword>
<keyword id="KW-0479">Metal-binding</keyword>
<keyword id="KW-0560">Oxidoreductase</keyword>
<keyword id="KW-0847">Vitamin C</keyword>
<gene>
    <name type="ordered locus">ABSDF3031</name>
</gene>
<dbReference type="EC" id="1.14.11.-" evidence="1"/>
<dbReference type="EMBL" id="CU468230">
    <property type="protein sequence ID" value="CAP02317.1"/>
    <property type="molecule type" value="Genomic_DNA"/>
</dbReference>
<dbReference type="SMR" id="B0VL49"/>
<dbReference type="KEGG" id="abm:ABSDF3031"/>
<dbReference type="HOGENOM" id="CLU_106663_0_0_6"/>
<dbReference type="BioCyc" id="ABAU509170:GCL9-2505-MONOMER"/>
<dbReference type="Proteomes" id="UP000001741">
    <property type="component" value="Chromosome"/>
</dbReference>
<dbReference type="GO" id="GO:0016706">
    <property type="term" value="F:2-oxoglutarate-dependent dioxygenase activity"/>
    <property type="evidence" value="ECO:0007669"/>
    <property type="project" value="UniProtKB-UniRule"/>
</dbReference>
<dbReference type="GO" id="GO:0005506">
    <property type="term" value="F:iron ion binding"/>
    <property type="evidence" value="ECO:0007669"/>
    <property type="project" value="UniProtKB-UniRule"/>
</dbReference>
<dbReference type="GO" id="GO:0031418">
    <property type="term" value="F:L-ascorbic acid binding"/>
    <property type="evidence" value="ECO:0007669"/>
    <property type="project" value="UniProtKB-KW"/>
</dbReference>
<dbReference type="GO" id="GO:0006974">
    <property type="term" value="P:DNA damage response"/>
    <property type="evidence" value="ECO:0007669"/>
    <property type="project" value="TreeGrafter"/>
</dbReference>
<dbReference type="GO" id="GO:0006879">
    <property type="term" value="P:intracellular iron ion homeostasis"/>
    <property type="evidence" value="ECO:0007669"/>
    <property type="project" value="TreeGrafter"/>
</dbReference>
<dbReference type="Gene3D" id="2.60.120.620">
    <property type="entry name" value="q2cbj1_9rhob like domain"/>
    <property type="match status" value="1"/>
</dbReference>
<dbReference type="Gene3D" id="4.10.860.20">
    <property type="entry name" value="Rabenosyn, Rab binding domain"/>
    <property type="match status" value="1"/>
</dbReference>
<dbReference type="HAMAP" id="MF_00657">
    <property type="entry name" value="Hydroxyl_YbiX"/>
    <property type="match status" value="1"/>
</dbReference>
<dbReference type="InterPro" id="IPR005123">
    <property type="entry name" value="Oxoglu/Fe-dep_dioxygenase_dom"/>
</dbReference>
<dbReference type="InterPro" id="IPR041097">
    <property type="entry name" value="PKHD_C"/>
</dbReference>
<dbReference type="InterPro" id="IPR023550">
    <property type="entry name" value="PKHD_hydroxylase"/>
</dbReference>
<dbReference type="InterPro" id="IPR006620">
    <property type="entry name" value="Pro_4_hyd_alph"/>
</dbReference>
<dbReference type="InterPro" id="IPR044862">
    <property type="entry name" value="Pro_4_hyd_alph_FE2OG_OXY"/>
</dbReference>
<dbReference type="NCBIfam" id="NF003974">
    <property type="entry name" value="PRK05467.1-3"/>
    <property type="match status" value="1"/>
</dbReference>
<dbReference type="NCBIfam" id="NF003975">
    <property type="entry name" value="PRK05467.1-4"/>
    <property type="match status" value="1"/>
</dbReference>
<dbReference type="PANTHER" id="PTHR41536">
    <property type="entry name" value="PKHD-TYPE HYDROXYLASE YBIX"/>
    <property type="match status" value="1"/>
</dbReference>
<dbReference type="PANTHER" id="PTHR41536:SF1">
    <property type="entry name" value="PKHD-TYPE HYDROXYLASE YBIX"/>
    <property type="match status" value="1"/>
</dbReference>
<dbReference type="Pfam" id="PF13640">
    <property type="entry name" value="2OG-FeII_Oxy_3"/>
    <property type="match status" value="1"/>
</dbReference>
<dbReference type="Pfam" id="PF18331">
    <property type="entry name" value="PKHD_C"/>
    <property type="match status" value="1"/>
</dbReference>
<dbReference type="SMART" id="SM00702">
    <property type="entry name" value="P4Hc"/>
    <property type="match status" value="1"/>
</dbReference>
<dbReference type="SUPFAM" id="SSF51197">
    <property type="entry name" value="Clavaminate synthase-like"/>
    <property type="match status" value="1"/>
</dbReference>
<dbReference type="PROSITE" id="PS51471">
    <property type="entry name" value="FE2OG_OXY"/>
    <property type="match status" value="1"/>
</dbReference>
<organism>
    <name type="scientific">Acinetobacter baumannii (strain SDF)</name>
    <dbReference type="NCBI Taxonomy" id="509170"/>
    <lineage>
        <taxon>Bacteria</taxon>
        <taxon>Pseudomonadati</taxon>
        <taxon>Pseudomonadota</taxon>
        <taxon>Gammaproteobacteria</taxon>
        <taxon>Moraxellales</taxon>
        <taxon>Moraxellaceae</taxon>
        <taxon>Acinetobacter</taxon>
        <taxon>Acinetobacter calcoaceticus/baumannii complex</taxon>
    </lineage>
</organism>